<name>PPAC_LISW6</name>
<evidence type="ECO:0000255" key="1">
    <source>
        <dbReference type="HAMAP-Rule" id="MF_00207"/>
    </source>
</evidence>
<proteinExistence type="inferred from homology"/>
<sequence length="308" mass="33779">MTKTLVFGHKNPDTDTICSAISYAELKKAQGADIEAVRLGELNSETTFVLDYFQATAPRLVQTVANEVSEVALVDHNERQQSANDIDEVTVTAVVDHHRIANFETSDPLYYRAEPVGCTTTILLKMFRENEVEISKTVAGLMLSAIISDTLLFQSPTCTEEDKVAAEKLAVIADVDIQTYGMEMLKAGADVSKKTVAELLLDAKEFNMNGNKVEIAQINVVDVNDVLNRRSEVEALMTQNVVDKGLDLYLFVITNILTNDSIGISIGSKTSVVEEAYGIKFVENQAPLKGVVSRKKQVVPILTDTFAK</sequence>
<reference key="1">
    <citation type="journal article" date="2006" name="J. Bacteriol.">
        <title>Whole-genome sequence of Listeria welshimeri reveals common steps in genome reduction with Listeria innocua as compared to Listeria monocytogenes.</title>
        <authorList>
            <person name="Hain T."/>
            <person name="Steinweg C."/>
            <person name="Kuenne C.T."/>
            <person name="Billion A."/>
            <person name="Ghai R."/>
            <person name="Chatterjee S.S."/>
            <person name="Domann E."/>
            <person name="Kaerst U."/>
            <person name="Goesmann A."/>
            <person name="Bekel T."/>
            <person name="Bartels D."/>
            <person name="Kaiser O."/>
            <person name="Meyer F."/>
            <person name="Puehler A."/>
            <person name="Weisshaar B."/>
            <person name="Wehland J."/>
            <person name="Liang C."/>
            <person name="Dandekar T."/>
            <person name="Lampidis R."/>
            <person name="Kreft J."/>
            <person name="Goebel W."/>
            <person name="Chakraborty T."/>
        </authorList>
    </citation>
    <scope>NUCLEOTIDE SEQUENCE [LARGE SCALE GENOMIC DNA]</scope>
    <source>
        <strain>ATCC 35897 / DSM 20650 / CCUG 15529 / CIP 8149 / NCTC 11857 / SLCC 5334 / V8</strain>
    </source>
</reference>
<feature type="chain" id="PRO_1000012317" description="Probable manganese-dependent inorganic pyrophosphatase">
    <location>
        <begin position="1"/>
        <end position="308"/>
    </location>
</feature>
<feature type="binding site" evidence="1">
    <location>
        <position position="9"/>
    </location>
    <ligand>
        <name>Mn(2+)</name>
        <dbReference type="ChEBI" id="CHEBI:29035"/>
        <label>1</label>
    </ligand>
</feature>
<feature type="binding site" evidence="1">
    <location>
        <position position="13"/>
    </location>
    <ligand>
        <name>Mn(2+)</name>
        <dbReference type="ChEBI" id="CHEBI:29035"/>
        <label>1</label>
    </ligand>
</feature>
<feature type="binding site" evidence="1">
    <location>
        <position position="15"/>
    </location>
    <ligand>
        <name>Mn(2+)</name>
        <dbReference type="ChEBI" id="CHEBI:29035"/>
        <label>2</label>
    </ligand>
</feature>
<feature type="binding site" evidence="1">
    <location>
        <position position="75"/>
    </location>
    <ligand>
        <name>Mn(2+)</name>
        <dbReference type="ChEBI" id="CHEBI:29035"/>
        <label>1</label>
    </ligand>
</feature>
<feature type="binding site" evidence="1">
    <location>
        <position position="75"/>
    </location>
    <ligand>
        <name>Mn(2+)</name>
        <dbReference type="ChEBI" id="CHEBI:29035"/>
        <label>2</label>
    </ligand>
</feature>
<feature type="binding site" evidence="1">
    <location>
        <position position="97"/>
    </location>
    <ligand>
        <name>Mn(2+)</name>
        <dbReference type="ChEBI" id="CHEBI:29035"/>
        <label>2</label>
    </ligand>
</feature>
<feature type="binding site" evidence="1">
    <location>
        <position position="149"/>
    </location>
    <ligand>
        <name>Mn(2+)</name>
        <dbReference type="ChEBI" id="CHEBI:29035"/>
        <label>2</label>
    </ligand>
</feature>
<gene>
    <name evidence="1" type="primary">ppaC</name>
    <name type="ordered locus">lwe1464</name>
</gene>
<comment type="catalytic activity">
    <reaction evidence="1">
        <text>diphosphate + H2O = 2 phosphate + H(+)</text>
        <dbReference type="Rhea" id="RHEA:24576"/>
        <dbReference type="ChEBI" id="CHEBI:15377"/>
        <dbReference type="ChEBI" id="CHEBI:15378"/>
        <dbReference type="ChEBI" id="CHEBI:33019"/>
        <dbReference type="ChEBI" id="CHEBI:43474"/>
        <dbReference type="EC" id="3.6.1.1"/>
    </reaction>
</comment>
<comment type="cofactor">
    <cofactor evidence="1">
        <name>Mn(2+)</name>
        <dbReference type="ChEBI" id="CHEBI:29035"/>
    </cofactor>
    <text evidence="1">Binds 2 manganese ions per subunit.</text>
</comment>
<comment type="subcellular location">
    <subcellularLocation>
        <location evidence="1">Cytoplasm</location>
    </subcellularLocation>
</comment>
<comment type="similarity">
    <text evidence="1">Belongs to the PPase class C family.</text>
</comment>
<dbReference type="EC" id="3.6.1.1" evidence="1"/>
<dbReference type="EMBL" id="AM263198">
    <property type="protein sequence ID" value="CAK20882.1"/>
    <property type="molecule type" value="Genomic_DNA"/>
</dbReference>
<dbReference type="RefSeq" id="WP_011702259.1">
    <property type="nucleotide sequence ID" value="NC_008555.1"/>
</dbReference>
<dbReference type="SMR" id="A0AIQ0"/>
<dbReference type="STRING" id="386043.lwe1464"/>
<dbReference type="GeneID" id="61189340"/>
<dbReference type="KEGG" id="lwe:lwe1464"/>
<dbReference type="eggNOG" id="COG1227">
    <property type="taxonomic scope" value="Bacteria"/>
</dbReference>
<dbReference type="HOGENOM" id="CLU_025243_0_1_9"/>
<dbReference type="OrthoDB" id="9766150at2"/>
<dbReference type="Proteomes" id="UP000000779">
    <property type="component" value="Chromosome"/>
</dbReference>
<dbReference type="GO" id="GO:0005737">
    <property type="term" value="C:cytoplasm"/>
    <property type="evidence" value="ECO:0007669"/>
    <property type="project" value="UniProtKB-SubCell"/>
</dbReference>
<dbReference type="GO" id="GO:0004427">
    <property type="term" value="F:inorganic diphosphate phosphatase activity"/>
    <property type="evidence" value="ECO:0007669"/>
    <property type="project" value="UniProtKB-UniRule"/>
</dbReference>
<dbReference type="GO" id="GO:0030145">
    <property type="term" value="F:manganese ion binding"/>
    <property type="evidence" value="ECO:0007669"/>
    <property type="project" value="UniProtKB-UniRule"/>
</dbReference>
<dbReference type="FunFam" id="3.10.310.20:FF:000001">
    <property type="entry name" value="Probable manganese-dependent inorganic pyrophosphatase"/>
    <property type="match status" value="1"/>
</dbReference>
<dbReference type="FunFam" id="3.90.1640.10:FF:000001">
    <property type="entry name" value="Probable manganese-dependent inorganic pyrophosphatase"/>
    <property type="match status" value="1"/>
</dbReference>
<dbReference type="Gene3D" id="3.10.310.20">
    <property type="entry name" value="DHHA2 domain"/>
    <property type="match status" value="1"/>
</dbReference>
<dbReference type="Gene3D" id="3.90.1640.10">
    <property type="entry name" value="inorganic pyrophosphatase (n-terminal core)"/>
    <property type="match status" value="1"/>
</dbReference>
<dbReference type="HAMAP" id="MF_00207">
    <property type="entry name" value="PPase_C"/>
    <property type="match status" value="1"/>
</dbReference>
<dbReference type="InterPro" id="IPR001667">
    <property type="entry name" value="DDH_dom"/>
</dbReference>
<dbReference type="InterPro" id="IPR038763">
    <property type="entry name" value="DHH_sf"/>
</dbReference>
<dbReference type="InterPro" id="IPR004097">
    <property type="entry name" value="DHHA2"/>
</dbReference>
<dbReference type="InterPro" id="IPR038222">
    <property type="entry name" value="DHHA2_dom_sf"/>
</dbReference>
<dbReference type="InterPro" id="IPR022934">
    <property type="entry name" value="Mn-dep_inorganic_PyrPase"/>
</dbReference>
<dbReference type="NCBIfam" id="NF003877">
    <property type="entry name" value="PRK05427.1"/>
    <property type="match status" value="1"/>
</dbReference>
<dbReference type="PANTHER" id="PTHR12112">
    <property type="entry name" value="BNIP - RELATED"/>
    <property type="match status" value="1"/>
</dbReference>
<dbReference type="PANTHER" id="PTHR12112:SF22">
    <property type="entry name" value="MANGANESE-DEPENDENT INORGANIC PYROPHOSPHATASE-RELATED"/>
    <property type="match status" value="1"/>
</dbReference>
<dbReference type="Pfam" id="PF01368">
    <property type="entry name" value="DHH"/>
    <property type="match status" value="1"/>
</dbReference>
<dbReference type="Pfam" id="PF02833">
    <property type="entry name" value="DHHA2"/>
    <property type="match status" value="1"/>
</dbReference>
<dbReference type="SMART" id="SM01131">
    <property type="entry name" value="DHHA2"/>
    <property type="match status" value="1"/>
</dbReference>
<dbReference type="SUPFAM" id="SSF64182">
    <property type="entry name" value="DHH phosphoesterases"/>
    <property type="match status" value="1"/>
</dbReference>
<protein>
    <recommendedName>
        <fullName evidence="1">Probable manganese-dependent inorganic pyrophosphatase</fullName>
        <ecNumber evidence="1">3.6.1.1</ecNumber>
    </recommendedName>
    <alternativeName>
        <fullName evidence="1">Pyrophosphate phospho-hydrolase</fullName>
        <shortName evidence="1">PPase</shortName>
    </alternativeName>
</protein>
<accession>A0AIQ0</accession>
<keyword id="KW-0963">Cytoplasm</keyword>
<keyword id="KW-0378">Hydrolase</keyword>
<keyword id="KW-0464">Manganese</keyword>
<keyword id="KW-0479">Metal-binding</keyword>
<organism>
    <name type="scientific">Listeria welshimeri serovar 6b (strain ATCC 35897 / DSM 20650 / CCUG 15529 / CIP 8149 / NCTC 11857 / SLCC 5334 / V8)</name>
    <dbReference type="NCBI Taxonomy" id="386043"/>
    <lineage>
        <taxon>Bacteria</taxon>
        <taxon>Bacillati</taxon>
        <taxon>Bacillota</taxon>
        <taxon>Bacilli</taxon>
        <taxon>Bacillales</taxon>
        <taxon>Listeriaceae</taxon>
        <taxon>Listeria</taxon>
    </lineage>
</organism>